<dbReference type="EMBL" id="CP001396">
    <property type="protein sequence ID" value="ACR65180.1"/>
    <property type="molecule type" value="Genomic_DNA"/>
</dbReference>
<dbReference type="RefSeq" id="WP_001279752.1">
    <property type="nucleotide sequence ID" value="NC_012759.1"/>
</dbReference>
<dbReference type="SMR" id="C4ZYW2"/>
<dbReference type="KEGG" id="ebw:BWG_3375"/>
<dbReference type="HOGENOM" id="CLU_035023_3_1_6"/>
<dbReference type="GO" id="GO:0005886">
    <property type="term" value="C:plasma membrane"/>
    <property type="evidence" value="ECO:0007669"/>
    <property type="project" value="UniProtKB-SubCell"/>
</dbReference>
<dbReference type="GO" id="GO:0008324">
    <property type="term" value="F:monoatomic cation transmembrane transporter activity"/>
    <property type="evidence" value="ECO:0007669"/>
    <property type="project" value="InterPro"/>
</dbReference>
<dbReference type="GO" id="GO:0006813">
    <property type="term" value="P:potassium ion transport"/>
    <property type="evidence" value="ECO:0007669"/>
    <property type="project" value="InterPro"/>
</dbReference>
<dbReference type="FunFam" id="3.30.70.1450:FF:000004">
    <property type="entry name" value="Putative transport protein YidE"/>
    <property type="match status" value="1"/>
</dbReference>
<dbReference type="Gene3D" id="3.30.70.1450">
    <property type="entry name" value="Regulator of K+ conductance, C-terminal domain"/>
    <property type="match status" value="2"/>
</dbReference>
<dbReference type="HAMAP" id="MF_01016">
    <property type="entry name" value="YidE"/>
    <property type="match status" value="1"/>
</dbReference>
<dbReference type="InterPro" id="IPR050144">
    <property type="entry name" value="AAE_transporter"/>
</dbReference>
<dbReference type="InterPro" id="IPR006037">
    <property type="entry name" value="RCK_C"/>
</dbReference>
<dbReference type="InterPro" id="IPR036721">
    <property type="entry name" value="RCK_C_sf"/>
</dbReference>
<dbReference type="InterPro" id="IPR023018">
    <property type="entry name" value="Transpt_YidE_put"/>
</dbReference>
<dbReference type="InterPro" id="IPR006512">
    <property type="entry name" value="YidE_YbjL"/>
</dbReference>
<dbReference type="NCBIfam" id="NF003007">
    <property type="entry name" value="PRK03818.1"/>
    <property type="match status" value="1"/>
</dbReference>
<dbReference type="NCBIfam" id="TIGR01625">
    <property type="entry name" value="YidE_YbjL_dupl"/>
    <property type="match status" value="2"/>
</dbReference>
<dbReference type="PANTHER" id="PTHR30445">
    <property type="entry name" value="K(+)_H(+) ANTIPORTER SUBUNIT KHTT"/>
    <property type="match status" value="1"/>
</dbReference>
<dbReference type="PANTHER" id="PTHR30445:SF3">
    <property type="entry name" value="TRANSPORT PROTEIN YIDE-RELATED"/>
    <property type="match status" value="1"/>
</dbReference>
<dbReference type="Pfam" id="PF06826">
    <property type="entry name" value="Asp-Al_Ex"/>
    <property type="match status" value="2"/>
</dbReference>
<dbReference type="Pfam" id="PF02080">
    <property type="entry name" value="TrkA_C"/>
    <property type="match status" value="2"/>
</dbReference>
<dbReference type="SUPFAM" id="SSF116726">
    <property type="entry name" value="TrkA C-terminal domain-like"/>
    <property type="match status" value="2"/>
</dbReference>
<dbReference type="PROSITE" id="PS51202">
    <property type="entry name" value="RCK_C"/>
    <property type="match status" value="2"/>
</dbReference>
<comment type="subcellular location">
    <subcellularLocation>
        <location evidence="1">Cell membrane</location>
        <topology evidence="1">Multi-pass membrane protein</topology>
    </subcellularLocation>
</comment>
<comment type="similarity">
    <text evidence="1">Belongs to the AAE transporter (TC 2.A.81) family. YidE subfamily.</text>
</comment>
<protein>
    <recommendedName>
        <fullName evidence="1">Putative transport protein YidE</fullName>
    </recommendedName>
</protein>
<evidence type="ECO:0000255" key="1">
    <source>
        <dbReference type="HAMAP-Rule" id="MF_01016"/>
    </source>
</evidence>
<keyword id="KW-1003">Cell membrane</keyword>
<keyword id="KW-0472">Membrane</keyword>
<keyword id="KW-0677">Repeat</keyword>
<keyword id="KW-0812">Transmembrane</keyword>
<keyword id="KW-1133">Transmembrane helix</keyword>
<keyword id="KW-0813">Transport</keyword>
<reference key="1">
    <citation type="journal article" date="2009" name="J. Bacteriol.">
        <title>Genomic sequencing reveals regulatory mutations and recombinational events in the widely used MC4100 lineage of Escherichia coli K-12.</title>
        <authorList>
            <person name="Ferenci T."/>
            <person name="Zhou Z."/>
            <person name="Betteridge T."/>
            <person name="Ren Y."/>
            <person name="Liu Y."/>
            <person name="Feng L."/>
            <person name="Reeves P.R."/>
            <person name="Wang L."/>
        </authorList>
    </citation>
    <scope>NUCLEOTIDE SEQUENCE [LARGE SCALE GENOMIC DNA]</scope>
    <source>
        <strain>K12 / MC4100 / BW2952</strain>
    </source>
</reference>
<organism>
    <name type="scientific">Escherichia coli (strain K12 / MC4100 / BW2952)</name>
    <dbReference type="NCBI Taxonomy" id="595496"/>
    <lineage>
        <taxon>Bacteria</taxon>
        <taxon>Pseudomonadati</taxon>
        <taxon>Pseudomonadota</taxon>
        <taxon>Gammaproteobacteria</taxon>
        <taxon>Enterobacterales</taxon>
        <taxon>Enterobacteriaceae</taxon>
        <taxon>Escherichia</taxon>
    </lineage>
</organism>
<gene>
    <name evidence="1" type="primary">yidE</name>
    <name type="ordered locus">BWG_3375</name>
</gene>
<accession>C4ZYW2</accession>
<name>YIDE_ECOBW</name>
<feature type="chain" id="PRO_1000213241" description="Putative transport protein YidE">
    <location>
        <begin position="1"/>
        <end position="553"/>
    </location>
</feature>
<feature type="transmembrane region" description="Helical" evidence="1">
    <location>
        <begin position="4"/>
        <end position="24"/>
    </location>
</feature>
<feature type="transmembrane region" description="Helical" evidence="1">
    <location>
        <begin position="28"/>
        <end position="48"/>
    </location>
</feature>
<feature type="transmembrane region" description="Helical" evidence="1">
    <location>
        <begin position="65"/>
        <end position="85"/>
    </location>
</feature>
<feature type="transmembrane region" description="Helical" evidence="1">
    <location>
        <begin position="95"/>
        <end position="115"/>
    </location>
</feature>
<feature type="transmembrane region" description="Helical" evidence="1">
    <location>
        <begin position="158"/>
        <end position="178"/>
    </location>
</feature>
<feature type="transmembrane region" description="Helical" evidence="1">
    <location>
        <begin position="371"/>
        <end position="391"/>
    </location>
</feature>
<feature type="transmembrane region" description="Helical" evidence="1">
    <location>
        <begin position="393"/>
        <end position="413"/>
    </location>
</feature>
<feature type="transmembrane region" description="Helical" evidence="1">
    <location>
        <begin position="439"/>
        <end position="459"/>
    </location>
</feature>
<feature type="transmembrane region" description="Helical" evidence="1">
    <location>
        <begin position="464"/>
        <end position="484"/>
    </location>
</feature>
<feature type="transmembrane region" description="Helical" evidence="1">
    <location>
        <begin position="493"/>
        <end position="513"/>
    </location>
</feature>
<feature type="transmembrane region" description="Helical" evidence="1">
    <location>
        <begin position="533"/>
        <end position="553"/>
    </location>
</feature>
<feature type="domain" description="RCK C-terminal 1" evidence="1">
    <location>
        <begin position="191"/>
        <end position="276"/>
    </location>
</feature>
<feature type="domain" description="RCK C-terminal 2" evidence="1">
    <location>
        <begin position="279"/>
        <end position="361"/>
    </location>
</feature>
<sequence>MSDIALTVSILALVAVVGLFIGNVKFRGIGLGIGGVLFGGIIVGHFVSQAGMTLSSDMLHVIQEFGLILFVYTIGIQVGPGFFASLRVSGLRLNLFAVLIVIIGGLVTAILHKLFDIPLPVVLGIFSGAVTNTPALGAGQQILRDLGTPMEMVDQMGMSYAMAYPFGICGILFTMWMLRVIFRVNVETEAQQHESSRTNGGALIKTINIRVENPNLHDLAIKDVPILNGDKIICSRLKREETLKVPSPDTIIQLGDLLHLVGQPADLHNAQLVIGQEVDTSLSTKGTDLRVERVVVTNENVLGKRIRDLHFKERYDVVISRLNRAGVELVASGDISLQFGDILNLVGRPSAIDAVANVLGNAQQKLQQVQMLPVFIGIGLGVLLGSIPVFVPGFPAALKLGLAGGPLIMALILGRIGSIGKLYWFMPPSANLALRELGIVLFLSVVGLKSGGDFVNTLVNGEGLSWIGYGALITAVPLITVGILARMLAKMNYLTMCGMLAGSMTDPPALAFANNLHPTSGAAALSYATVYPLVMFLRIITPQLLAVLFWSIG</sequence>
<proteinExistence type="inferred from homology"/>